<sequence length="172" mass="19345">MINKHNSVLHNQFWQSYNHRGFMVTKLSDLMSYVSSWARSNSLWPMTFGLACCAVEMMHTAASKYDLDRYGIMFRASPRQADVMIVAGTLTNKMAPALRKVYDQMTEPRYVISMGSCANGGGYYHYSYSVVRGCDRIVPVDIYVPGCPPTAEALLYGILCLQQKINRTATST</sequence>
<evidence type="ECO:0000250" key="1"/>
<evidence type="ECO:0000255" key="2">
    <source>
        <dbReference type="HAMAP-Rule" id="MF_01356"/>
    </source>
</evidence>
<accession>Q5HBM2</accession>
<accession>Q5FEB4</accession>
<name>NUOB_EHRRW</name>
<organism>
    <name type="scientific">Ehrlichia ruminantium (strain Welgevonden)</name>
    <dbReference type="NCBI Taxonomy" id="254945"/>
    <lineage>
        <taxon>Bacteria</taxon>
        <taxon>Pseudomonadati</taxon>
        <taxon>Pseudomonadota</taxon>
        <taxon>Alphaproteobacteria</taxon>
        <taxon>Rickettsiales</taxon>
        <taxon>Anaplasmataceae</taxon>
        <taxon>Ehrlichia</taxon>
    </lineage>
</organism>
<keyword id="KW-0004">4Fe-4S</keyword>
<keyword id="KW-0997">Cell inner membrane</keyword>
<keyword id="KW-1003">Cell membrane</keyword>
<keyword id="KW-0408">Iron</keyword>
<keyword id="KW-0411">Iron-sulfur</keyword>
<keyword id="KW-0472">Membrane</keyword>
<keyword id="KW-0479">Metal-binding</keyword>
<keyword id="KW-0520">NAD</keyword>
<keyword id="KW-0874">Quinone</keyword>
<keyword id="KW-1278">Translocase</keyword>
<keyword id="KW-0813">Transport</keyword>
<keyword id="KW-0830">Ubiquinone</keyword>
<comment type="function">
    <text evidence="1">NDH-1 shuttles electrons from NADH, via FMN and iron-sulfur (Fe-S) centers, to quinones in the respiratory chain. Couples the redox reaction to proton translocation (for every two electrons transferred, four hydrogen ions are translocated across the cytoplasmic membrane), and thus conserves the redox energy in a proton gradient (By similarity).</text>
</comment>
<comment type="catalytic activity">
    <reaction evidence="2">
        <text>a quinone + NADH + 5 H(+)(in) = a quinol + NAD(+) + 4 H(+)(out)</text>
        <dbReference type="Rhea" id="RHEA:57888"/>
        <dbReference type="ChEBI" id="CHEBI:15378"/>
        <dbReference type="ChEBI" id="CHEBI:24646"/>
        <dbReference type="ChEBI" id="CHEBI:57540"/>
        <dbReference type="ChEBI" id="CHEBI:57945"/>
        <dbReference type="ChEBI" id="CHEBI:132124"/>
    </reaction>
</comment>
<comment type="cofactor">
    <cofactor evidence="2">
        <name>[4Fe-4S] cluster</name>
        <dbReference type="ChEBI" id="CHEBI:49883"/>
    </cofactor>
    <text evidence="2">Binds 1 [4Fe-4S] cluster.</text>
</comment>
<comment type="subunit">
    <text evidence="2">NDH-1 is composed of 14 different subunits. Subunits NuoB, C, D, E, F, and G constitute the peripheral sector of the complex.</text>
</comment>
<comment type="subcellular location">
    <subcellularLocation>
        <location evidence="2">Cell inner membrane</location>
        <topology evidence="2">Peripheral membrane protein</topology>
        <orientation evidence="2">Cytoplasmic side</orientation>
    </subcellularLocation>
</comment>
<comment type="similarity">
    <text evidence="2">Belongs to the complex I 20 kDa subunit family.</text>
</comment>
<reference key="1">
    <citation type="journal article" date="2005" name="Proc. Natl. Acad. Sci. U.S.A.">
        <title>The genome of the heartwater agent Ehrlichia ruminantium contains multiple tandem repeats of actively variable copy number.</title>
        <authorList>
            <person name="Collins N.E."/>
            <person name="Liebenberg J."/>
            <person name="de Villiers E.P."/>
            <person name="Brayton K.A."/>
            <person name="Louw E."/>
            <person name="Pretorius A."/>
            <person name="Faber F.E."/>
            <person name="van Heerden H."/>
            <person name="Josemans A."/>
            <person name="van Kleef M."/>
            <person name="Steyn H.C."/>
            <person name="van Strijp M.F."/>
            <person name="Zweygarth E."/>
            <person name="Jongejan F."/>
            <person name="Maillard J.C."/>
            <person name="Berthier D."/>
            <person name="Botha M."/>
            <person name="Joubert F."/>
            <person name="Corton C.H."/>
            <person name="Thomson N.R."/>
            <person name="Allsopp M.T."/>
            <person name="Allsopp B.A."/>
        </authorList>
    </citation>
    <scope>NUCLEOTIDE SEQUENCE [LARGE SCALE GENOMIC DNA]</scope>
    <source>
        <strain>Welgevonden</strain>
    </source>
</reference>
<reference key="2">
    <citation type="journal article" date="2006" name="J. Bacteriol.">
        <title>Comparative genomic analysis of three strains of Ehrlichia ruminantium reveals an active process of genome size plasticity.</title>
        <authorList>
            <person name="Frutos R."/>
            <person name="Viari A."/>
            <person name="Ferraz C."/>
            <person name="Morgat A."/>
            <person name="Eychenie S."/>
            <person name="Kandassamy Y."/>
            <person name="Chantal I."/>
            <person name="Bensaid A."/>
            <person name="Coissac E."/>
            <person name="Vachiery N."/>
            <person name="Demaille J."/>
            <person name="Martinez D."/>
        </authorList>
    </citation>
    <scope>NUCLEOTIDE SEQUENCE [LARGE SCALE GENOMIC DNA]</scope>
    <source>
        <strain>Welgevonden</strain>
    </source>
</reference>
<protein>
    <recommendedName>
        <fullName evidence="2">NADH-quinone oxidoreductase subunit B</fullName>
        <ecNumber evidence="2">7.1.1.-</ecNumber>
    </recommendedName>
    <alternativeName>
        <fullName evidence="2">NADH dehydrogenase I subunit B</fullName>
    </alternativeName>
    <alternativeName>
        <fullName evidence="2">NDH-1 subunit B</fullName>
    </alternativeName>
</protein>
<feature type="chain" id="PRO_0000358406" description="NADH-quinone oxidoreductase subunit B">
    <location>
        <begin position="1"/>
        <end position="172"/>
    </location>
</feature>
<feature type="binding site" evidence="2">
    <location>
        <position position="52"/>
    </location>
    <ligand>
        <name>[4Fe-4S] cluster</name>
        <dbReference type="ChEBI" id="CHEBI:49883"/>
    </ligand>
</feature>
<feature type="binding site" evidence="2">
    <location>
        <position position="53"/>
    </location>
    <ligand>
        <name>[4Fe-4S] cluster</name>
        <dbReference type="ChEBI" id="CHEBI:49883"/>
    </ligand>
</feature>
<feature type="binding site" evidence="2">
    <location>
        <position position="117"/>
    </location>
    <ligand>
        <name>[4Fe-4S] cluster</name>
        <dbReference type="ChEBI" id="CHEBI:49883"/>
    </ligand>
</feature>
<feature type="binding site" evidence="2">
    <location>
        <position position="147"/>
    </location>
    <ligand>
        <name>[4Fe-4S] cluster</name>
        <dbReference type="ChEBI" id="CHEBI:49883"/>
    </ligand>
</feature>
<proteinExistence type="inferred from homology"/>
<gene>
    <name evidence="2" type="primary">nuoB</name>
    <name type="ordered locus">Erum3090</name>
    <name type="ordered locus">ERWE_CDS_03140</name>
</gene>
<dbReference type="EC" id="7.1.1.-" evidence="2"/>
<dbReference type="EMBL" id="CR767821">
    <property type="protein sequence ID" value="CAH58026.1"/>
    <property type="molecule type" value="Genomic_DNA"/>
</dbReference>
<dbReference type="EMBL" id="CR925678">
    <property type="protein sequence ID" value="CAI26808.1"/>
    <property type="molecule type" value="Genomic_DNA"/>
</dbReference>
<dbReference type="RefSeq" id="WP_011154989.1">
    <property type="nucleotide sequence ID" value="NC_005295.2"/>
</dbReference>
<dbReference type="SMR" id="Q5HBM2"/>
<dbReference type="GeneID" id="33058193"/>
<dbReference type="KEGG" id="eru:Erum3090"/>
<dbReference type="KEGG" id="erw:ERWE_CDS_03140"/>
<dbReference type="eggNOG" id="COG0377">
    <property type="taxonomic scope" value="Bacteria"/>
</dbReference>
<dbReference type="HOGENOM" id="CLU_055737_7_3_5"/>
<dbReference type="Proteomes" id="UP000001021">
    <property type="component" value="Chromosome"/>
</dbReference>
<dbReference type="GO" id="GO:0005886">
    <property type="term" value="C:plasma membrane"/>
    <property type="evidence" value="ECO:0007669"/>
    <property type="project" value="UniProtKB-SubCell"/>
</dbReference>
<dbReference type="GO" id="GO:0045271">
    <property type="term" value="C:respiratory chain complex I"/>
    <property type="evidence" value="ECO:0007669"/>
    <property type="project" value="TreeGrafter"/>
</dbReference>
<dbReference type="GO" id="GO:0051539">
    <property type="term" value="F:4 iron, 4 sulfur cluster binding"/>
    <property type="evidence" value="ECO:0007669"/>
    <property type="project" value="UniProtKB-KW"/>
</dbReference>
<dbReference type="GO" id="GO:0005506">
    <property type="term" value="F:iron ion binding"/>
    <property type="evidence" value="ECO:0007669"/>
    <property type="project" value="UniProtKB-UniRule"/>
</dbReference>
<dbReference type="GO" id="GO:0008137">
    <property type="term" value="F:NADH dehydrogenase (ubiquinone) activity"/>
    <property type="evidence" value="ECO:0007669"/>
    <property type="project" value="InterPro"/>
</dbReference>
<dbReference type="GO" id="GO:0050136">
    <property type="term" value="F:NADH:ubiquinone reductase (non-electrogenic) activity"/>
    <property type="evidence" value="ECO:0007669"/>
    <property type="project" value="UniProtKB-UniRule"/>
</dbReference>
<dbReference type="GO" id="GO:0048038">
    <property type="term" value="F:quinone binding"/>
    <property type="evidence" value="ECO:0007669"/>
    <property type="project" value="UniProtKB-KW"/>
</dbReference>
<dbReference type="GO" id="GO:0009060">
    <property type="term" value="P:aerobic respiration"/>
    <property type="evidence" value="ECO:0007669"/>
    <property type="project" value="TreeGrafter"/>
</dbReference>
<dbReference type="GO" id="GO:0015990">
    <property type="term" value="P:electron transport coupled proton transport"/>
    <property type="evidence" value="ECO:0007669"/>
    <property type="project" value="TreeGrafter"/>
</dbReference>
<dbReference type="GO" id="GO:0032981">
    <property type="term" value="P:mitochondrial respiratory chain complex I assembly"/>
    <property type="evidence" value="ECO:0007669"/>
    <property type="project" value="TreeGrafter"/>
</dbReference>
<dbReference type="FunFam" id="3.40.50.12280:FF:000001">
    <property type="entry name" value="NADH-quinone oxidoreductase subunit B 2"/>
    <property type="match status" value="1"/>
</dbReference>
<dbReference type="Gene3D" id="3.40.50.12280">
    <property type="match status" value="1"/>
</dbReference>
<dbReference type="HAMAP" id="MF_01356">
    <property type="entry name" value="NDH1_NuoB"/>
    <property type="match status" value="1"/>
</dbReference>
<dbReference type="InterPro" id="IPR006137">
    <property type="entry name" value="NADH_UbQ_OxRdtase-like_20kDa"/>
</dbReference>
<dbReference type="InterPro" id="IPR006138">
    <property type="entry name" value="NADH_UQ_OxRdtase_20Kd_su"/>
</dbReference>
<dbReference type="NCBIfam" id="TIGR01957">
    <property type="entry name" value="nuoB_fam"/>
    <property type="match status" value="1"/>
</dbReference>
<dbReference type="NCBIfam" id="NF005012">
    <property type="entry name" value="PRK06411.1"/>
    <property type="match status" value="1"/>
</dbReference>
<dbReference type="PANTHER" id="PTHR11995">
    <property type="entry name" value="NADH DEHYDROGENASE"/>
    <property type="match status" value="1"/>
</dbReference>
<dbReference type="PANTHER" id="PTHR11995:SF14">
    <property type="entry name" value="NADH DEHYDROGENASE [UBIQUINONE] IRON-SULFUR PROTEIN 7, MITOCHONDRIAL"/>
    <property type="match status" value="1"/>
</dbReference>
<dbReference type="Pfam" id="PF01058">
    <property type="entry name" value="Oxidored_q6"/>
    <property type="match status" value="1"/>
</dbReference>
<dbReference type="SUPFAM" id="SSF56770">
    <property type="entry name" value="HydA/Nqo6-like"/>
    <property type="match status" value="1"/>
</dbReference>
<dbReference type="PROSITE" id="PS01150">
    <property type="entry name" value="COMPLEX1_20K"/>
    <property type="match status" value="1"/>
</dbReference>